<dbReference type="EMBL" id="M13903">
    <property type="protein sequence ID" value="AAA59186.1"/>
    <property type="molecule type" value="Genomic_DNA"/>
</dbReference>
<dbReference type="EMBL" id="AL162596">
    <property type="status" value="NOT_ANNOTATED_CDS"/>
    <property type="molecule type" value="Genomic_DNA"/>
</dbReference>
<dbReference type="EMBL" id="BC046391">
    <property type="protein sequence ID" value="AAH46391.1"/>
    <property type="molecule type" value="mRNA"/>
</dbReference>
<dbReference type="CCDS" id="CCDS1030.1"/>
<dbReference type="PIR" id="A24168">
    <property type="entry name" value="A24168"/>
</dbReference>
<dbReference type="RefSeq" id="NP_005538.2">
    <property type="nucleotide sequence ID" value="NM_005547.2"/>
</dbReference>
<dbReference type="BioGRID" id="109917">
    <property type="interactions" value="179"/>
</dbReference>
<dbReference type="FunCoup" id="P07476">
    <property type="interactions" value="345"/>
</dbReference>
<dbReference type="IntAct" id="P07476">
    <property type="interactions" value="107"/>
</dbReference>
<dbReference type="MINT" id="P07476"/>
<dbReference type="STRING" id="9606.ENSP00000357753"/>
<dbReference type="GlyGen" id="P07476">
    <property type="glycosylation" value="2 sites, 1 O-linked glycan (2 sites)"/>
</dbReference>
<dbReference type="iPTMnet" id="P07476"/>
<dbReference type="PhosphoSitePlus" id="P07476"/>
<dbReference type="BioMuta" id="IVL"/>
<dbReference type="DMDM" id="254763301"/>
<dbReference type="jPOST" id="P07476"/>
<dbReference type="MassIVE" id="P07476"/>
<dbReference type="PaxDb" id="9606-ENSP00000357753"/>
<dbReference type="PeptideAtlas" id="P07476"/>
<dbReference type="PRIDE" id="P07476"/>
<dbReference type="ProteomicsDB" id="52005"/>
<dbReference type="Antibodypedia" id="3703">
    <property type="antibodies" value="774 antibodies from 39 providers"/>
</dbReference>
<dbReference type="DNASU" id="3713"/>
<dbReference type="Ensembl" id="ENST00000368764.4">
    <property type="protein sequence ID" value="ENSP00000357753.3"/>
    <property type="gene ID" value="ENSG00000163207.7"/>
</dbReference>
<dbReference type="GeneID" id="3713"/>
<dbReference type="KEGG" id="hsa:3713"/>
<dbReference type="MANE-Select" id="ENST00000368764.4">
    <property type="protein sequence ID" value="ENSP00000357753.3"/>
    <property type="RefSeq nucleotide sequence ID" value="NM_005547.4"/>
    <property type="RefSeq protein sequence ID" value="NP_005538.2"/>
</dbReference>
<dbReference type="UCSC" id="uc001fau.4">
    <property type="organism name" value="human"/>
</dbReference>
<dbReference type="AGR" id="HGNC:6187"/>
<dbReference type="CTD" id="3713"/>
<dbReference type="DisGeNET" id="3713"/>
<dbReference type="GeneCards" id="IVL"/>
<dbReference type="HGNC" id="HGNC:6187">
    <property type="gene designation" value="IVL"/>
</dbReference>
<dbReference type="HPA" id="ENSG00000163207">
    <property type="expression patterns" value="Group enriched (cervix, esophagus, salivary gland, skin, vagina)"/>
</dbReference>
<dbReference type="MIM" id="147360">
    <property type="type" value="gene"/>
</dbReference>
<dbReference type="neXtProt" id="NX_P07476"/>
<dbReference type="OpenTargets" id="ENSG00000163207"/>
<dbReference type="PharmGKB" id="PA29985"/>
<dbReference type="VEuPathDB" id="HostDB:ENSG00000163207"/>
<dbReference type="eggNOG" id="ENOG502S84Y">
    <property type="taxonomic scope" value="Eukaryota"/>
</dbReference>
<dbReference type="GeneTree" id="ENSGT00940000164168"/>
<dbReference type="HOGENOM" id="CLU_017743_0_0_1"/>
<dbReference type="InParanoid" id="P07476"/>
<dbReference type="OMA" id="HLGKQQH"/>
<dbReference type="OrthoDB" id="9635080at2759"/>
<dbReference type="PAN-GO" id="P07476">
    <property type="GO annotations" value="2 GO annotations based on evolutionary models"/>
</dbReference>
<dbReference type="PhylomeDB" id="P07476"/>
<dbReference type="TreeFam" id="TF340025"/>
<dbReference type="PathwayCommons" id="P07476"/>
<dbReference type="Reactome" id="R-HSA-6809371">
    <property type="pathway name" value="Formation of the cornified envelope"/>
</dbReference>
<dbReference type="Reactome" id="R-HSA-9725554">
    <property type="pathway name" value="Differentiation of Keratinocytes in Interfollicular Epidermis in Mammalian Skin"/>
</dbReference>
<dbReference type="SignaLink" id="P07476"/>
<dbReference type="SIGNOR" id="P07476"/>
<dbReference type="BioGRID-ORCS" id="3713">
    <property type="hits" value="13 hits in 1147 CRISPR screens"/>
</dbReference>
<dbReference type="ChiTaRS" id="IVL">
    <property type="organism name" value="human"/>
</dbReference>
<dbReference type="GeneWiki" id="Involucrin"/>
<dbReference type="GenomeRNAi" id="3713"/>
<dbReference type="Pharos" id="P07476">
    <property type="development level" value="Tbio"/>
</dbReference>
<dbReference type="PRO" id="PR:P07476"/>
<dbReference type="Proteomes" id="UP000005640">
    <property type="component" value="Chromosome 1"/>
</dbReference>
<dbReference type="RNAct" id="P07476">
    <property type="molecule type" value="protein"/>
</dbReference>
<dbReference type="Bgee" id="ENSG00000163207">
    <property type="expression patterns" value="Expressed in cervix squamous epithelium and 113 other cell types or tissues"/>
</dbReference>
<dbReference type="GO" id="GO:0005813">
    <property type="term" value="C:centrosome"/>
    <property type="evidence" value="ECO:0000314"/>
    <property type="project" value="HPA"/>
</dbReference>
<dbReference type="GO" id="GO:0001533">
    <property type="term" value="C:cornified envelope"/>
    <property type="evidence" value="ECO:0000314"/>
    <property type="project" value="UniProtKB"/>
</dbReference>
<dbReference type="GO" id="GO:0005737">
    <property type="term" value="C:cytoplasm"/>
    <property type="evidence" value="ECO:0000314"/>
    <property type="project" value="UniProtKB"/>
</dbReference>
<dbReference type="GO" id="GO:0005829">
    <property type="term" value="C:cytosol"/>
    <property type="evidence" value="ECO:0000314"/>
    <property type="project" value="HPA"/>
</dbReference>
<dbReference type="GO" id="GO:0070062">
    <property type="term" value="C:extracellular exosome"/>
    <property type="evidence" value="ECO:0007005"/>
    <property type="project" value="UniProtKB"/>
</dbReference>
<dbReference type="GO" id="GO:0016604">
    <property type="term" value="C:nuclear body"/>
    <property type="evidence" value="ECO:0000314"/>
    <property type="project" value="HPA"/>
</dbReference>
<dbReference type="GO" id="GO:0018153">
    <property type="term" value="P:isopeptide cross-linking via N6-(L-isoglutamyl)-L-lysine"/>
    <property type="evidence" value="ECO:0000304"/>
    <property type="project" value="UniProtKB"/>
</dbReference>
<dbReference type="GO" id="GO:0031424">
    <property type="term" value="P:keratinization"/>
    <property type="evidence" value="ECO:0007669"/>
    <property type="project" value="UniProtKB-KW"/>
</dbReference>
<dbReference type="GO" id="GO:0030216">
    <property type="term" value="P:keratinocyte differentiation"/>
    <property type="evidence" value="ECO:0000314"/>
    <property type="project" value="UniProtKB"/>
</dbReference>
<dbReference type="GO" id="GO:0018149">
    <property type="term" value="P:peptide cross-linking"/>
    <property type="evidence" value="ECO:0000314"/>
    <property type="project" value="UniProtKB"/>
</dbReference>
<dbReference type="GO" id="GO:0010224">
    <property type="term" value="P:response to UV-B"/>
    <property type="evidence" value="ECO:0000314"/>
    <property type="project" value="UniProtKB"/>
</dbReference>
<dbReference type="InterPro" id="IPR019743">
    <property type="entry name" value="Involucrin_CS"/>
</dbReference>
<dbReference type="InterPro" id="IPR019571">
    <property type="entry name" value="Involucrin_N"/>
</dbReference>
<dbReference type="InterPro" id="IPR000354">
    <property type="entry name" value="Involucrin_rpt"/>
</dbReference>
<dbReference type="Pfam" id="PF00904">
    <property type="entry name" value="Involucrin"/>
    <property type="match status" value="28"/>
</dbReference>
<dbReference type="Pfam" id="PF10583">
    <property type="entry name" value="Involucrin_N"/>
    <property type="match status" value="1"/>
</dbReference>
<dbReference type="PROSITE" id="PS00795">
    <property type="entry name" value="INVOLUCRIN"/>
    <property type="match status" value="1"/>
</dbReference>
<reference key="1">
    <citation type="journal article" date="1986" name="Cell">
        <title>Structure and evolution of the human involucrin gene.</title>
        <authorList>
            <person name="Eckert R.L."/>
            <person name="Green H."/>
        </authorList>
    </citation>
    <scope>NUCLEOTIDE SEQUENCE [GENOMIC DNA]</scope>
    <scope>VARIANTS GLN-227; SER-236 AND GLU-237</scope>
</reference>
<reference key="2">
    <citation type="journal article" date="2006" name="Nature">
        <title>The DNA sequence and biological annotation of human chromosome 1.</title>
        <authorList>
            <person name="Gregory S.G."/>
            <person name="Barlow K.F."/>
            <person name="McLay K.E."/>
            <person name="Kaul R."/>
            <person name="Swarbreck D."/>
            <person name="Dunham A."/>
            <person name="Scott C.E."/>
            <person name="Howe K.L."/>
            <person name="Woodfine K."/>
            <person name="Spencer C.C.A."/>
            <person name="Jones M.C."/>
            <person name="Gillson C."/>
            <person name="Searle S."/>
            <person name="Zhou Y."/>
            <person name="Kokocinski F."/>
            <person name="McDonald L."/>
            <person name="Evans R."/>
            <person name="Phillips K."/>
            <person name="Atkinson A."/>
            <person name="Cooper R."/>
            <person name="Jones C."/>
            <person name="Hall R.E."/>
            <person name="Andrews T.D."/>
            <person name="Lloyd C."/>
            <person name="Ainscough R."/>
            <person name="Almeida J.P."/>
            <person name="Ambrose K.D."/>
            <person name="Anderson F."/>
            <person name="Andrew R.W."/>
            <person name="Ashwell R.I.S."/>
            <person name="Aubin K."/>
            <person name="Babbage A.K."/>
            <person name="Bagguley C.L."/>
            <person name="Bailey J."/>
            <person name="Beasley H."/>
            <person name="Bethel G."/>
            <person name="Bird C.P."/>
            <person name="Bray-Allen S."/>
            <person name="Brown J.Y."/>
            <person name="Brown A.J."/>
            <person name="Buckley D."/>
            <person name="Burton J."/>
            <person name="Bye J."/>
            <person name="Carder C."/>
            <person name="Chapman J.C."/>
            <person name="Clark S.Y."/>
            <person name="Clarke G."/>
            <person name="Clee C."/>
            <person name="Cobley V."/>
            <person name="Collier R.E."/>
            <person name="Corby N."/>
            <person name="Coville G.J."/>
            <person name="Davies J."/>
            <person name="Deadman R."/>
            <person name="Dunn M."/>
            <person name="Earthrowl M."/>
            <person name="Ellington A.G."/>
            <person name="Errington H."/>
            <person name="Frankish A."/>
            <person name="Frankland J."/>
            <person name="French L."/>
            <person name="Garner P."/>
            <person name="Garnett J."/>
            <person name="Gay L."/>
            <person name="Ghori M.R.J."/>
            <person name="Gibson R."/>
            <person name="Gilby L.M."/>
            <person name="Gillett W."/>
            <person name="Glithero R.J."/>
            <person name="Grafham D.V."/>
            <person name="Griffiths C."/>
            <person name="Griffiths-Jones S."/>
            <person name="Grocock R."/>
            <person name="Hammond S."/>
            <person name="Harrison E.S.I."/>
            <person name="Hart E."/>
            <person name="Haugen E."/>
            <person name="Heath P.D."/>
            <person name="Holmes S."/>
            <person name="Holt K."/>
            <person name="Howden P.J."/>
            <person name="Hunt A.R."/>
            <person name="Hunt S.E."/>
            <person name="Hunter G."/>
            <person name="Isherwood J."/>
            <person name="James R."/>
            <person name="Johnson C."/>
            <person name="Johnson D."/>
            <person name="Joy A."/>
            <person name="Kay M."/>
            <person name="Kershaw J.K."/>
            <person name="Kibukawa M."/>
            <person name="Kimberley A.M."/>
            <person name="King A."/>
            <person name="Knights A.J."/>
            <person name="Lad H."/>
            <person name="Laird G."/>
            <person name="Lawlor S."/>
            <person name="Leongamornlert D.A."/>
            <person name="Lloyd D.M."/>
            <person name="Loveland J."/>
            <person name="Lovell J."/>
            <person name="Lush M.J."/>
            <person name="Lyne R."/>
            <person name="Martin S."/>
            <person name="Mashreghi-Mohammadi M."/>
            <person name="Matthews L."/>
            <person name="Matthews N.S.W."/>
            <person name="McLaren S."/>
            <person name="Milne S."/>
            <person name="Mistry S."/>
            <person name="Moore M.J.F."/>
            <person name="Nickerson T."/>
            <person name="O'Dell C.N."/>
            <person name="Oliver K."/>
            <person name="Palmeiri A."/>
            <person name="Palmer S.A."/>
            <person name="Parker A."/>
            <person name="Patel D."/>
            <person name="Pearce A.V."/>
            <person name="Peck A.I."/>
            <person name="Pelan S."/>
            <person name="Phelps K."/>
            <person name="Phillimore B.J."/>
            <person name="Plumb R."/>
            <person name="Rajan J."/>
            <person name="Raymond C."/>
            <person name="Rouse G."/>
            <person name="Saenphimmachak C."/>
            <person name="Sehra H.K."/>
            <person name="Sheridan E."/>
            <person name="Shownkeen R."/>
            <person name="Sims S."/>
            <person name="Skuce C.D."/>
            <person name="Smith M."/>
            <person name="Steward C."/>
            <person name="Subramanian S."/>
            <person name="Sycamore N."/>
            <person name="Tracey A."/>
            <person name="Tromans A."/>
            <person name="Van Helmond Z."/>
            <person name="Wall M."/>
            <person name="Wallis J.M."/>
            <person name="White S."/>
            <person name="Whitehead S.L."/>
            <person name="Wilkinson J.E."/>
            <person name="Willey D.L."/>
            <person name="Williams H."/>
            <person name="Wilming L."/>
            <person name="Wray P.W."/>
            <person name="Wu Z."/>
            <person name="Coulson A."/>
            <person name="Vaudin M."/>
            <person name="Sulston J.E."/>
            <person name="Durbin R.M."/>
            <person name="Hubbard T."/>
            <person name="Wooster R."/>
            <person name="Dunham I."/>
            <person name="Carter N.P."/>
            <person name="McVean G."/>
            <person name="Ross M.T."/>
            <person name="Harrow J."/>
            <person name="Olson M.V."/>
            <person name="Beck S."/>
            <person name="Rogers J."/>
            <person name="Bentley D.R."/>
        </authorList>
    </citation>
    <scope>NUCLEOTIDE SEQUENCE [LARGE SCALE GENOMIC DNA]</scope>
</reference>
<reference key="3">
    <citation type="journal article" date="2004" name="Genome Res.">
        <title>The status, quality, and expansion of the NIH full-length cDNA project: the Mammalian Gene Collection (MGC).</title>
        <authorList>
            <consortium name="The MGC Project Team"/>
        </authorList>
    </citation>
    <scope>NUCLEOTIDE SEQUENCE [LARGE SCALE MRNA]</scope>
    <scope>VARIANTS GLN-227; SER-236 AND GLU-237</scope>
    <source>
        <tissue>Skin</tissue>
    </source>
</reference>
<reference key="4">
    <citation type="journal article" date="1997" name="J. Biol. Chem.">
        <title>S100A11, S100A10, annexin I, desmosomal proteins, small proline-rich proteins, plasminogen activator inhibitor-2, and involucrin are components of the cornified envelope of cultured human epidermal keratinocytes.</title>
        <authorList>
            <person name="Robinson N.A."/>
            <person name="Lapic S."/>
            <person name="Welter J.F."/>
            <person name="Eckert R.L."/>
        </authorList>
    </citation>
    <scope>PROTEIN SEQUENCE OF 281-290</scope>
    <source>
        <tissue>Keratinocyte</tissue>
    </source>
</reference>
<reference key="5">
    <citation type="journal article" date="1992" name="J. Biol. Chem.">
        <title>Biophysical characterization of involucrin reveals a molecule ideally suited to function as an intermolecular cross-bridge of the keratinocyte cornified envelope.</title>
        <authorList>
            <person name="Yaffe M.B."/>
            <person name="Beegen H."/>
            <person name="Eckert R.L."/>
        </authorList>
    </citation>
    <scope>STRUCTURAL STUDIES</scope>
</reference>
<reference key="6">
    <citation type="journal article" date="1988" name="J. Biol. Chem.">
        <title>The glutamine residues reactive in transglutaminase-catalyzed cross-linking of involucrin.</title>
        <authorList>
            <person name="Simon M."/>
            <person name="Green H."/>
        </authorList>
    </citation>
    <scope>GLN-LYS CROSS-LINK</scope>
</reference>
<reference key="7">
    <citation type="journal article" date="1998" name="J. Biol. Chem.">
        <title>Ceramides are bound to structural proteins of the human foreskin epidermal cornified cell envelope.</title>
        <authorList>
            <person name="Marekov L.N."/>
            <person name="Steinert P.M."/>
        </authorList>
    </citation>
    <scope>LIPIDATION AT GLN-79; GLN-118 AND GLN-133</scope>
</reference>
<reference key="8">
    <citation type="journal article" date="2004" name="Biochem. Biophys. Res. Commun.">
        <title>Identification and characterization of a novel component of the cornified envelope, cornifelin.</title>
        <authorList>
            <person name="Michibata H."/>
            <person name="Chiba H."/>
            <person name="Wakimoto K."/>
            <person name="Seishima M."/>
            <person name="Kawasaki S."/>
            <person name="Okubo K."/>
            <person name="Mitsui H."/>
            <person name="Torii H."/>
            <person name="Imai Y."/>
        </authorList>
    </citation>
    <scope>INTERACTION WITH INVOLUCRIN</scope>
</reference>
<reference key="9">
    <citation type="journal article" date="2011" name="BMC Syst. Biol.">
        <title>Initial characterization of the human central proteome.</title>
        <authorList>
            <person name="Burkard T.R."/>
            <person name="Planyavsky M."/>
            <person name="Kaupe I."/>
            <person name="Breitwieser F.P."/>
            <person name="Buerckstuemmer T."/>
            <person name="Bennett K.L."/>
            <person name="Superti-Furga G."/>
            <person name="Colinge J."/>
        </authorList>
    </citation>
    <scope>IDENTIFICATION BY MASS SPECTROMETRY [LARGE SCALE ANALYSIS]</scope>
</reference>
<accession>P07476</accession>
<accession>Q5T7P4</accession>
<evidence type="ECO:0000256" key="1">
    <source>
        <dbReference type="SAM" id="MobiDB-lite"/>
    </source>
</evidence>
<evidence type="ECO:0000269" key="2">
    <source>
    </source>
</evidence>
<evidence type="ECO:0000269" key="3">
    <source>
    </source>
</evidence>
<evidence type="ECO:0000305" key="4"/>
<evidence type="ECO:0000305" key="5">
    <source>
    </source>
</evidence>
<comment type="function">
    <text>Part of the insoluble cornified cell envelope (CE) of stratified squamous epithelia.</text>
</comment>
<comment type="subunit">
    <text>Directly or indirectly cross-linked to cornifelin (CNFN).</text>
</comment>
<comment type="interaction">
    <interactant intactId="EBI-11307220">
        <id>P07476</id>
    </interactant>
    <interactant intactId="EBI-717666">
        <id>Q96AP0</id>
        <label>ACD</label>
    </interactant>
    <organismsDiffer>false</organismsDiffer>
    <experiments>2</experiments>
</comment>
<comment type="subcellular location">
    <subcellularLocation>
        <location>Cytoplasm</location>
    </subcellularLocation>
    <text>Constituent of the scaffolding of the cornified envelope.</text>
</comment>
<comment type="tissue specificity">
    <text>Keratinocytes of epidermis and other stratified squamous epithelia.</text>
</comment>
<comment type="PTM">
    <text>Substrate of transglutaminase. Some glutamines and lysines are cross-linked to other involucrin molecules, to other proteins such as keratin, desmoplakin, periplakin and envoplakin, and to lipids like omega-hydroxyceramide.</text>
</comment>
<comment type="similarity">
    <text evidence="4">Belongs to the involucrin family.</text>
</comment>
<protein>
    <recommendedName>
        <fullName>Involucrin</fullName>
    </recommendedName>
</protein>
<keyword id="KW-0963">Cytoplasm</keyword>
<keyword id="KW-0903">Direct protein sequencing</keyword>
<keyword id="KW-1017">Isopeptide bond</keyword>
<keyword id="KW-0417">Keratinization</keyword>
<keyword id="KW-0449">Lipoprotein</keyword>
<keyword id="KW-1267">Proteomics identification</keyword>
<keyword id="KW-1185">Reference proteome</keyword>
<keyword id="KW-0677">Repeat</keyword>
<gene>
    <name type="primary">IVL</name>
</gene>
<organism>
    <name type="scientific">Homo sapiens</name>
    <name type="common">Human</name>
    <dbReference type="NCBI Taxonomy" id="9606"/>
    <lineage>
        <taxon>Eukaryota</taxon>
        <taxon>Metazoa</taxon>
        <taxon>Chordata</taxon>
        <taxon>Craniata</taxon>
        <taxon>Vertebrata</taxon>
        <taxon>Euteleostomi</taxon>
        <taxon>Mammalia</taxon>
        <taxon>Eutheria</taxon>
        <taxon>Euarchontoglires</taxon>
        <taxon>Primates</taxon>
        <taxon>Haplorrhini</taxon>
        <taxon>Catarrhini</taxon>
        <taxon>Hominidae</taxon>
        <taxon>Homo</taxon>
    </lineage>
</organism>
<sequence>MSQQHTLPVTLSPALSQELLKTVPPPVNTHQEQMKQPTPLPPPCQKVPVELPVEVPSKQEEKHMTAVKGLPEQECEQQQKEPQEQELQQQHWEQHEEYQKAENPEQQLKQEKTQRDQQLNKQLEEEKKLLDQQLDQELVKRDEQLGMKKEQLLELPEQQEGHLKHLEQQEGQLKHPEQQEGQLELPEQQEGQLELPEQQEGQLELPEQQEGQLELPEQQEGQLELPEQQEGQLELPQQQEGQLELSEQQEGQLELSEQQEGQLKHLEHQEGQLEVPEEQMGQLKYLEQQEGQLKHLDQQEKQPELPEQQMGQLKHLEQQEGQPKHLEQQEGQLEQLEEQEGQLKHLEQQEGQLEHLEHQEGQLGLPEQQVLQLKQLEKQQGQPKHLEEEEGQLKHLVQQEGQLKHLVQQEGQLEQQERQVEHLEQQVGQLKHLEEQEGQLKHLEQQQGQLEVPEQQVGQPKNLEQEEKQLELPEQQEGQVKHLEKQEAQLELPEQQVGQPKHLEQQEKHLEHPEQQDGQLKHLEQQEGQLKDLEQQKGQLEQPVFAPAPGQVQDIQPALPTKGEVLLPVEHQQQKQEVQWPPKHK</sequence>
<name>INVO_HUMAN</name>
<proteinExistence type="evidence at protein level"/>
<feature type="chain" id="PRO_0000159736" description="Involucrin">
    <location>
        <begin position="1"/>
        <end position="585"/>
    </location>
</feature>
<feature type="repeat" description="1">
    <location>
        <begin position="153"/>
        <end position="162"/>
    </location>
</feature>
<feature type="repeat" description="2">
    <location>
        <begin position="163"/>
        <end position="172"/>
    </location>
</feature>
<feature type="repeat" description="3">
    <location>
        <begin position="173"/>
        <end position="182"/>
    </location>
</feature>
<feature type="repeat" description="4">
    <location>
        <begin position="183"/>
        <end position="192"/>
    </location>
</feature>
<feature type="repeat" description="5">
    <location>
        <begin position="193"/>
        <end position="202"/>
    </location>
</feature>
<feature type="repeat" description="6">
    <location>
        <begin position="203"/>
        <end position="212"/>
    </location>
</feature>
<feature type="repeat" description="7">
    <location>
        <begin position="213"/>
        <end position="222"/>
    </location>
</feature>
<feature type="repeat" description="8">
    <location>
        <begin position="223"/>
        <end position="232"/>
    </location>
</feature>
<feature type="repeat" description="9">
    <location>
        <begin position="233"/>
        <end position="242"/>
    </location>
</feature>
<feature type="repeat" description="10">
    <location>
        <begin position="243"/>
        <end position="252"/>
    </location>
</feature>
<feature type="repeat" description="11">
    <location>
        <begin position="253"/>
        <end position="262"/>
    </location>
</feature>
<feature type="repeat" description="12">
    <location>
        <begin position="263"/>
        <end position="272"/>
    </location>
</feature>
<feature type="repeat" description="13">
    <location>
        <begin position="273"/>
        <end position="282"/>
    </location>
</feature>
<feature type="repeat" description="14">
    <location>
        <begin position="283"/>
        <end position="292"/>
    </location>
</feature>
<feature type="repeat" description="15">
    <location>
        <begin position="293"/>
        <end position="302"/>
    </location>
</feature>
<feature type="repeat" description="16">
    <location>
        <begin position="303"/>
        <end position="312"/>
    </location>
</feature>
<feature type="repeat" description="17">
    <location>
        <begin position="313"/>
        <end position="322"/>
    </location>
</feature>
<feature type="repeat" description="18">
    <location>
        <begin position="323"/>
        <end position="332"/>
    </location>
</feature>
<feature type="repeat" description="19">
    <location>
        <begin position="333"/>
        <end position="342"/>
    </location>
</feature>
<feature type="repeat" description="20">
    <location>
        <begin position="343"/>
        <end position="352"/>
    </location>
</feature>
<feature type="repeat" description="21">
    <location>
        <begin position="353"/>
        <end position="362"/>
    </location>
</feature>
<feature type="repeat" description="22">
    <location>
        <begin position="363"/>
        <end position="372"/>
    </location>
</feature>
<feature type="repeat" description="23">
    <location>
        <begin position="373"/>
        <end position="382"/>
    </location>
</feature>
<feature type="repeat" description="24; approximate">
    <location>
        <begin position="383"/>
        <end position="392"/>
    </location>
</feature>
<feature type="repeat" description="25">
    <location>
        <begin position="393"/>
        <end position="402"/>
    </location>
</feature>
<feature type="repeat" description="26">
    <location>
        <begin position="403"/>
        <end position="412"/>
    </location>
</feature>
<feature type="repeat" description="27">
    <location>
        <begin position="413"/>
        <end position="422"/>
    </location>
</feature>
<feature type="repeat" description="28">
    <location>
        <begin position="423"/>
        <end position="432"/>
    </location>
</feature>
<feature type="repeat" description="29">
    <location>
        <begin position="433"/>
        <end position="442"/>
    </location>
</feature>
<feature type="repeat" description="30">
    <location>
        <begin position="443"/>
        <end position="452"/>
    </location>
</feature>
<feature type="repeat" description="31">
    <location>
        <begin position="453"/>
        <end position="462"/>
    </location>
</feature>
<feature type="repeat" description="32">
    <location>
        <begin position="463"/>
        <end position="472"/>
    </location>
</feature>
<feature type="repeat" description="33">
    <location>
        <begin position="473"/>
        <end position="482"/>
    </location>
</feature>
<feature type="repeat" description="34">
    <location>
        <begin position="483"/>
        <end position="492"/>
    </location>
</feature>
<feature type="repeat" description="35">
    <location>
        <begin position="493"/>
        <end position="502"/>
    </location>
</feature>
<feature type="repeat" description="36; approximate">
    <location>
        <begin position="503"/>
        <end position="512"/>
    </location>
</feature>
<feature type="repeat" description="37">
    <location>
        <begin position="513"/>
        <end position="522"/>
    </location>
</feature>
<feature type="repeat" description="38">
    <location>
        <begin position="523"/>
        <end position="532"/>
    </location>
</feature>
<feature type="repeat" description="39; approximate">
    <location>
        <begin position="533"/>
        <end position="542"/>
    </location>
</feature>
<feature type="region of interest" description="Disordered" evidence="1">
    <location>
        <begin position="1"/>
        <end position="132"/>
    </location>
</feature>
<feature type="region of interest" description="Disordered" evidence="1">
    <location>
        <begin position="149"/>
        <end position="540"/>
    </location>
</feature>
<feature type="region of interest" description="39 X 10 AA approximate tandem repeats of [LP]-[EKG]-[LHVYQEK]-[PLSQE]-[EQDV]-[QHEKRGA]-Q-[EMVQLP]-[GKLE]-[QHVNLD]">
    <location>
        <begin position="153"/>
        <end position="542"/>
    </location>
</feature>
<feature type="compositionally biased region" description="Polar residues" evidence="1">
    <location>
        <begin position="1"/>
        <end position="15"/>
    </location>
</feature>
<feature type="compositionally biased region" description="Basic and acidic residues" evidence="1">
    <location>
        <begin position="92"/>
        <end position="115"/>
    </location>
</feature>
<feature type="compositionally biased region" description="Basic and acidic residues" evidence="1">
    <location>
        <begin position="159"/>
        <end position="178"/>
    </location>
</feature>
<feature type="compositionally biased region" description="Low complexity" evidence="1">
    <location>
        <begin position="179"/>
        <end position="261"/>
    </location>
</feature>
<feature type="compositionally biased region" description="Basic and acidic residues" evidence="1">
    <location>
        <begin position="262"/>
        <end position="271"/>
    </location>
</feature>
<feature type="compositionally biased region" description="Basic and acidic residues" evidence="1">
    <location>
        <begin position="292"/>
        <end position="304"/>
    </location>
</feature>
<feature type="compositionally biased region" description="Basic and acidic residues" evidence="1">
    <location>
        <begin position="314"/>
        <end position="328"/>
    </location>
</feature>
<feature type="compositionally biased region" description="Basic and acidic residues" evidence="1">
    <location>
        <begin position="341"/>
        <end position="360"/>
    </location>
</feature>
<feature type="compositionally biased region" description="Low complexity" evidence="1">
    <location>
        <begin position="361"/>
        <end position="383"/>
    </location>
</feature>
<feature type="compositionally biased region" description="Basic and acidic residues" evidence="1">
    <location>
        <begin position="384"/>
        <end position="393"/>
    </location>
</feature>
<feature type="compositionally biased region" description="Basic and acidic residues" evidence="1">
    <location>
        <begin position="415"/>
        <end position="424"/>
    </location>
</feature>
<feature type="compositionally biased region" description="Basic and acidic residues" evidence="1">
    <location>
        <begin position="431"/>
        <end position="444"/>
    </location>
</feature>
<feature type="compositionally biased region" description="Low complexity" evidence="1">
    <location>
        <begin position="445"/>
        <end position="462"/>
    </location>
</feature>
<feature type="compositionally biased region" description="Basic and acidic residues" evidence="1">
    <location>
        <begin position="479"/>
        <end position="488"/>
    </location>
</feature>
<feature type="compositionally biased region" description="Basic and acidic residues" evidence="1">
    <location>
        <begin position="501"/>
        <end position="535"/>
    </location>
</feature>
<feature type="lipid moiety-binding region" description="Omega-hydroxyceramide glutamate ester" evidence="5">
    <location>
        <position position="79"/>
    </location>
</feature>
<feature type="lipid moiety-binding region" description="Omega-hydroxyceramide glutamate ester" evidence="5">
    <location>
        <position position="118"/>
    </location>
</feature>
<feature type="lipid moiety-binding region" description="Omega-hydroxyceramide glutamate ester" evidence="5">
    <location>
        <position position="133"/>
    </location>
</feature>
<feature type="cross-link" description="Isoglutamyl lysine isopeptide (Gln-Lys) (interchain with K-? in other proteins)">
    <location>
        <position position="496"/>
    </location>
</feature>
<feature type="sequence variant" id="VAR_029019" description="In dbSNP:rs2229496.">
    <original>T</original>
    <variation>A</variation>
    <location>
        <position position="113"/>
    </location>
</feature>
<feature type="sequence variant" id="VAR_029020" description="In dbSNP:rs11205133.">
    <original>L</original>
    <variation>P</variation>
    <location>
        <position position="166"/>
    </location>
</feature>
<feature type="sequence variant" id="VAR_029021" description="In dbSNP:rs12035307.">
    <original>K</original>
    <variation>E</variation>
    <location>
        <position position="174"/>
    </location>
</feature>
<feature type="sequence variant" id="VAR_058411" description="In dbSNP:rs11807064." evidence="2 3">
    <original>E</original>
    <variation>Q</variation>
    <location>
        <position position="227"/>
    </location>
</feature>
<feature type="sequence variant" id="VAR_058412" description="In dbSNP:rs17855670." evidence="2 3">
    <original>P</original>
    <variation>S</variation>
    <location>
        <position position="236"/>
    </location>
</feature>
<feature type="sequence variant" id="VAR_029022" description="In dbSNP:rs7520711." evidence="2 3">
    <original>Q</original>
    <variation>E</variation>
    <location>
        <position position="237"/>
    </location>
</feature>
<feature type="sequence variant" id="VAR_029023" description="In dbSNP:rs11205137.">
    <original>Q</original>
    <variation>K</variation>
    <location>
        <position position="312"/>
    </location>
</feature>
<feature type="sequence variant" id="VAR_029024" description="In dbSNP:rs7545520.">
    <original>V</original>
    <variation>L</variation>
    <location>
        <position position="480"/>
    </location>
</feature>